<protein>
    <recommendedName>
        <fullName evidence="1">Argininosuccinate synthase</fullName>
        <ecNumber evidence="1">6.3.4.5</ecNumber>
    </recommendedName>
    <alternativeName>
        <fullName evidence="1">Citrulline--aspartate ligase</fullName>
    </alternativeName>
</protein>
<name>ASSY_STAAN</name>
<reference key="1">
    <citation type="journal article" date="2001" name="Lancet">
        <title>Whole genome sequencing of meticillin-resistant Staphylococcus aureus.</title>
        <authorList>
            <person name="Kuroda M."/>
            <person name="Ohta T."/>
            <person name="Uchiyama I."/>
            <person name="Baba T."/>
            <person name="Yuzawa H."/>
            <person name="Kobayashi I."/>
            <person name="Cui L."/>
            <person name="Oguchi A."/>
            <person name="Aoki K."/>
            <person name="Nagai Y."/>
            <person name="Lian J.-Q."/>
            <person name="Ito T."/>
            <person name="Kanamori M."/>
            <person name="Matsumaru H."/>
            <person name="Maruyama A."/>
            <person name="Murakami H."/>
            <person name="Hosoyama A."/>
            <person name="Mizutani-Ui Y."/>
            <person name="Takahashi N.K."/>
            <person name="Sawano T."/>
            <person name="Inoue R."/>
            <person name="Kaito C."/>
            <person name="Sekimizu K."/>
            <person name="Hirakawa H."/>
            <person name="Kuhara S."/>
            <person name="Goto S."/>
            <person name="Yabuzaki J."/>
            <person name="Kanehisa M."/>
            <person name="Yamashita A."/>
            <person name="Oshima K."/>
            <person name="Furuya K."/>
            <person name="Yoshino C."/>
            <person name="Shiba T."/>
            <person name="Hattori M."/>
            <person name="Ogasawara N."/>
            <person name="Hayashi H."/>
            <person name="Hiramatsu K."/>
        </authorList>
    </citation>
    <scope>NUCLEOTIDE SEQUENCE [LARGE SCALE GENOMIC DNA]</scope>
    <source>
        <strain>N315</strain>
    </source>
</reference>
<proteinExistence type="inferred from homology"/>
<organism>
    <name type="scientific">Staphylococcus aureus (strain N315)</name>
    <dbReference type="NCBI Taxonomy" id="158879"/>
    <lineage>
        <taxon>Bacteria</taxon>
        <taxon>Bacillati</taxon>
        <taxon>Bacillota</taxon>
        <taxon>Bacilli</taxon>
        <taxon>Bacillales</taxon>
        <taxon>Staphylococcaceae</taxon>
        <taxon>Staphylococcus</taxon>
    </lineage>
</organism>
<accession>P63645</accession>
<accession>Q99VC7</accession>
<dbReference type="EC" id="6.3.4.5" evidence="1"/>
<dbReference type="EMBL" id="BA000018">
    <property type="protein sequence ID" value="BAB42061.1"/>
    <property type="molecule type" value="Genomic_DNA"/>
</dbReference>
<dbReference type="PIR" id="B89863">
    <property type="entry name" value="B89863"/>
</dbReference>
<dbReference type="RefSeq" id="WP_000660045.1">
    <property type="nucleotide sequence ID" value="NC_002745.2"/>
</dbReference>
<dbReference type="SMR" id="P63645"/>
<dbReference type="EnsemblBacteria" id="BAB42061">
    <property type="protein sequence ID" value="BAB42061"/>
    <property type="gene ID" value="BAB42061"/>
</dbReference>
<dbReference type="KEGG" id="sau:SA0822"/>
<dbReference type="HOGENOM" id="CLU_032784_4_2_9"/>
<dbReference type="UniPathway" id="UPA00068">
    <property type="reaction ID" value="UER00113"/>
</dbReference>
<dbReference type="GO" id="GO:0005737">
    <property type="term" value="C:cytoplasm"/>
    <property type="evidence" value="ECO:0007669"/>
    <property type="project" value="UniProtKB-SubCell"/>
</dbReference>
<dbReference type="GO" id="GO:0004055">
    <property type="term" value="F:argininosuccinate synthase activity"/>
    <property type="evidence" value="ECO:0007669"/>
    <property type="project" value="UniProtKB-UniRule"/>
</dbReference>
<dbReference type="GO" id="GO:0005524">
    <property type="term" value="F:ATP binding"/>
    <property type="evidence" value="ECO:0007669"/>
    <property type="project" value="UniProtKB-UniRule"/>
</dbReference>
<dbReference type="GO" id="GO:0000053">
    <property type="term" value="P:argininosuccinate metabolic process"/>
    <property type="evidence" value="ECO:0007669"/>
    <property type="project" value="TreeGrafter"/>
</dbReference>
<dbReference type="GO" id="GO:0006526">
    <property type="term" value="P:L-arginine biosynthetic process"/>
    <property type="evidence" value="ECO:0007669"/>
    <property type="project" value="UniProtKB-UniRule"/>
</dbReference>
<dbReference type="GO" id="GO:0000050">
    <property type="term" value="P:urea cycle"/>
    <property type="evidence" value="ECO:0007669"/>
    <property type="project" value="TreeGrafter"/>
</dbReference>
<dbReference type="CDD" id="cd01999">
    <property type="entry name" value="ASS"/>
    <property type="match status" value="1"/>
</dbReference>
<dbReference type="FunFam" id="1.20.5.470:FF:000002">
    <property type="entry name" value="Argininosuccinate synthase"/>
    <property type="match status" value="1"/>
</dbReference>
<dbReference type="FunFam" id="3.40.50.620:FF:000038">
    <property type="entry name" value="Argininosuccinate synthase"/>
    <property type="match status" value="1"/>
</dbReference>
<dbReference type="FunFam" id="3.90.1260.10:FF:000007">
    <property type="entry name" value="Argininosuccinate synthase"/>
    <property type="match status" value="1"/>
</dbReference>
<dbReference type="Gene3D" id="3.90.1260.10">
    <property type="entry name" value="Argininosuccinate synthetase, chain A, domain 2"/>
    <property type="match status" value="1"/>
</dbReference>
<dbReference type="Gene3D" id="3.40.50.620">
    <property type="entry name" value="HUPs"/>
    <property type="match status" value="1"/>
</dbReference>
<dbReference type="Gene3D" id="1.20.5.470">
    <property type="entry name" value="Single helix bin"/>
    <property type="match status" value="1"/>
</dbReference>
<dbReference type="HAMAP" id="MF_00005">
    <property type="entry name" value="Arg_succ_synth_type1"/>
    <property type="match status" value="1"/>
</dbReference>
<dbReference type="InterPro" id="IPR048268">
    <property type="entry name" value="Arginosuc_syn_C"/>
</dbReference>
<dbReference type="InterPro" id="IPR048267">
    <property type="entry name" value="Arginosuc_syn_N"/>
</dbReference>
<dbReference type="InterPro" id="IPR001518">
    <property type="entry name" value="Arginosuc_synth"/>
</dbReference>
<dbReference type="InterPro" id="IPR018223">
    <property type="entry name" value="Arginosuc_synth_CS"/>
</dbReference>
<dbReference type="InterPro" id="IPR023434">
    <property type="entry name" value="Arginosuc_synth_type_1_subfam"/>
</dbReference>
<dbReference type="InterPro" id="IPR024074">
    <property type="entry name" value="AS_cat/multimer_dom_body"/>
</dbReference>
<dbReference type="InterPro" id="IPR014729">
    <property type="entry name" value="Rossmann-like_a/b/a_fold"/>
</dbReference>
<dbReference type="NCBIfam" id="TIGR00032">
    <property type="entry name" value="argG"/>
    <property type="match status" value="1"/>
</dbReference>
<dbReference type="NCBIfam" id="NF001770">
    <property type="entry name" value="PRK00509.1"/>
    <property type="match status" value="1"/>
</dbReference>
<dbReference type="PANTHER" id="PTHR11587">
    <property type="entry name" value="ARGININOSUCCINATE SYNTHASE"/>
    <property type="match status" value="1"/>
</dbReference>
<dbReference type="PANTHER" id="PTHR11587:SF2">
    <property type="entry name" value="ARGININOSUCCINATE SYNTHASE"/>
    <property type="match status" value="1"/>
</dbReference>
<dbReference type="Pfam" id="PF20979">
    <property type="entry name" value="Arginosuc_syn_C"/>
    <property type="match status" value="1"/>
</dbReference>
<dbReference type="Pfam" id="PF00764">
    <property type="entry name" value="Arginosuc_synth"/>
    <property type="match status" value="1"/>
</dbReference>
<dbReference type="SUPFAM" id="SSF52402">
    <property type="entry name" value="Adenine nucleotide alpha hydrolases-like"/>
    <property type="match status" value="1"/>
</dbReference>
<dbReference type="SUPFAM" id="SSF69864">
    <property type="entry name" value="Argininosuccinate synthetase, C-terminal domain"/>
    <property type="match status" value="1"/>
</dbReference>
<dbReference type="PROSITE" id="PS00564">
    <property type="entry name" value="ARGININOSUCCIN_SYN_1"/>
    <property type="match status" value="1"/>
</dbReference>
<dbReference type="PROSITE" id="PS00565">
    <property type="entry name" value="ARGININOSUCCIN_SYN_2"/>
    <property type="match status" value="1"/>
</dbReference>
<sequence length="401" mass="44455">MKEKIVLAYSGGLDTSVAVQWLIDKGYDVVACCLDVGEGKDLDIVYKKALDMGAVECHIIDATKEFSDEYVSYAIKGNLMYENAYPLVSALSRPLIAKKLVEIAEKTNSVGIAHGCTGKGNDQVRFEVAIKALNPSLKAFAPVREWAWSREEEIDYAIKHNIPVSINHDSPYSIDQNLWGRANECGILEDPYAAPPEDAFDLTNALEETPDTADEIILTFDKGIPVQIDGKTYELDDLILTLNALAGKHGIGRIDHVENRLVGIKSREIYEAPAAEVILKAHKALETITLTKDVAHFKPIIEKQFAEQLYNGLWFSPLTDSLKLFIDSTQQYVSGDVRIKLFKGNAIVNGRKSPYTLYDEKLATYTKEDAFNQDAAVGFIDIYGLPTQVNAMLHGGYSNEQ</sequence>
<gene>
    <name evidence="1" type="primary">argG</name>
    <name type="ordered locus">SA0822</name>
</gene>
<feature type="chain" id="PRO_0000148637" description="Argininosuccinate synthase">
    <location>
        <begin position="1"/>
        <end position="401"/>
    </location>
</feature>
<feature type="binding site" evidence="1">
    <location>
        <begin position="8"/>
        <end position="16"/>
    </location>
    <ligand>
        <name>ATP</name>
        <dbReference type="ChEBI" id="CHEBI:30616"/>
    </ligand>
</feature>
<feature type="binding site" evidence="1">
    <location>
        <position position="85"/>
    </location>
    <ligand>
        <name>L-citrulline</name>
        <dbReference type="ChEBI" id="CHEBI:57743"/>
    </ligand>
</feature>
<feature type="binding site" evidence="1">
    <location>
        <position position="115"/>
    </location>
    <ligand>
        <name>ATP</name>
        <dbReference type="ChEBI" id="CHEBI:30616"/>
    </ligand>
</feature>
<feature type="binding site" evidence="1">
    <location>
        <position position="117"/>
    </location>
    <ligand>
        <name>L-aspartate</name>
        <dbReference type="ChEBI" id="CHEBI:29991"/>
    </ligand>
</feature>
<feature type="binding site" evidence="1">
    <location>
        <position position="121"/>
    </location>
    <ligand>
        <name>L-aspartate</name>
        <dbReference type="ChEBI" id="CHEBI:29991"/>
    </ligand>
</feature>
<feature type="binding site" evidence="1">
    <location>
        <position position="121"/>
    </location>
    <ligand>
        <name>L-citrulline</name>
        <dbReference type="ChEBI" id="CHEBI:57743"/>
    </ligand>
</feature>
<feature type="binding site" evidence="1">
    <location>
        <position position="122"/>
    </location>
    <ligand>
        <name>L-aspartate</name>
        <dbReference type="ChEBI" id="CHEBI:29991"/>
    </ligand>
</feature>
<feature type="binding site" evidence="1">
    <location>
        <position position="125"/>
    </location>
    <ligand>
        <name>L-citrulline</name>
        <dbReference type="ChEBI" id="CHEBI:57743"/>
    </ligand>
</feature>
<feature type="binding site" evidence="1">
    <location>
        <position position="173"/>
    </location>
    <ligand>
        <name>L-citrulline</name>
        <dbReference type="ChEBI" id="CHEBI:57743"/>
    </ligand>
</feature>
<feature type="binding site" evidence="1">
    <location>
        <position position="258"/>
    </location>
    <ligand>
        <name>L-citrulline</name>
        <dbReference type="ChEBI" id="CHEBI:57743"/>
    </ligand>
</feature>
<feature type="binding site" evidence="1">
    <location>
        <position position="270"/>
    </location>
    <ligand>
        <name>L-citrulline</name>
        <dbReference type="ChEBI" id="CHEBI:57743"/>
    </ligand>
</feature>
<comment type="catalytic activity">
    <reaction evidence="1">
        <text>L-citrulline + L-aspartate + ATP = 2-(N(omega)-L-arginino)succinate + AMP + diphosphate + H(+)</text>
        <dbReference type="Rhea" id="RHEA:10932"/>
        <dbReference type="ChEBI" id="CHEBI:15378"/>
        <dbReference type="ChEBI" id="CHEBI:29991"/>
        <dbReference type="ChEBI" id="CHEBI:30616"/>
        <dbReference type="ChEBI" id="CHEBI:33019"/>
        <dbReference type="ChEBI" id="CHEBI:57472"/>
        <dbReference type="ChEBI" id="CHEBI:57743"/>
        <dbReference type="ChEBI" id="CHEBI:456215"/>
        <dbReference type="EC" id="6.3.4.5"/>
    </reaction>
</comment>
<comment type="pathway">
    <text evidence="1">Amino-acid biosynthesis; L-arginine biosynthesis; L-arginine from L-ornithine and carbamoyl phosphate: step 2/3.</text>
</comment>
<comment type="subunit">
    <text evidence="1">Homotetramer.</text>
</comment>
<comment type="subcellular location">
    <subcellularLocation>
        <location evidence="1">Cytoplasm</location>
    </subcellularLocation>
</comment>
<comment type="similarity">
    <text evidence="1">Belongs to the argininosuccinate synthase family. Type 1 subfamily.</text>
</comment>
<evidence type="ECO:0000255" key="1">
    <source>
        <dbReference type="HAMAP-Rule" id="MF_00005"/>
    </source>
</evidence>
<keyword id="KW-0028">Amino-acid biosynthesis</keyword>
<keyword id="KW-0055">Arginine biosynthesis</keyword>
<keyword id="KW-0067">ATP-binding</keyword>
<keyword id="KW-0963">Cytoplasm</keyword>
<keyword id="KW-0436">Ligase</keyword>
<keyword id="KW-0547">Nucleotide-binding</keyword>